<comment type="function">
    <text evidence="1">This protein binds specifically to 23S rRNA; its binding is stimulated by other ribosomal proteins, e.g. L4, L17, and L20. It is important during the early stages of 50S assembly. It makes multiple contacts with different domains of the 23S rRNA in the assembled 50S subunit and ribosome (By similarity).</text>
</comment>
<comment type="function">
    <text evidence="1">The globular domain of the protein is located near the polypeptide exit tunnel on the outside of the subunit, while an extended beta-hairpin is found that lines the wall of the exit tunnel in the center of the 70S ribosome.</text>
</comment>
<comment type="subunit">
    <text evidence="1">Part of the 50S ribosomal subunit.</text>
</comment>
<comment type="similarity">
    <text evidence="1">Belongs to the universal ribosomal protein uL22 family.</text>
</comment>
<keyword id="KW-0687">Ribonucleoprotein</keyword>
<keyword id="KW-0689">Ribosomal protein</keyword>
<keyword id="KW-0694">RNA-binding</keyword>
<keyword id="KW-0699">rRNA-binding</keyword>
<proteinExistence type="inferred from homology"/>
<dbReference type="EMBL" id="CP000552">
    <property type="protein sequence ID" value="ABM72942.1"/>
    <property type="molecule type" value="Genomic_DNA"/>
</dbReference>
<dbReference type="RefSeq" id="WP_011821032.1">
    <property type="nucleotide sequence ID" value="NC_008817.1"/>
</dbReference>
<dbReference type="SMR" id="A2BYT1"/>
<dbReference type="STRING" id="167542.P9515_17351"/>
<dbReference type="GeneID" id="60201951"/>
<dbReference type="KEGG" id="pmc:P9515_17351"/>
<dbReference type="eggNOG" id="COG0091">
    <property type="taxonomic scope" value="Bacteria"/>
</dbReference>
<dbReference type="HOGENOM" id="CLU_083987_3_3_3"/>
<dbReference type="OrthoDB" id="9805969at2"/>
<dbReference type="Proteomes" id="UP000001589">
    <property type="component" value="Chromosome"/>
</dbReference>
<dbReference type="GO" id="GO:0022625">
    <property type="term" value="C:cytosolic large ribosomal subunit"/>
    <property type="evidence" value="ECO:0007669"/>
    <property type="project" value="TreeGrafter"/>
</dbReference>
<dbReference type="GO" id="GO:0019843">
    <property type="term" value="F:rRNA binding"/>
    <property type="evidence" value="ECO:0007669"/>
    <property type="project" value="UniProtKB-UniRule"/>
</dbReference>
<dbReference type="GO" id="GO:0003735">
    <property type="term" value="F:structural constituent of ribosome"/>
    <property type="evidence" value="ECO:0007669"/>
    <property type="project" value="InterPro"/>
</dbReference>
<dbReference type="GO" id="GO:0006412">
    <property type="term" value="P:translation"/>
    <property type="evidence" value="ECO:0007669"/>
    <property type="project" value="UniProtKB-UniRule"/>
</dbReference>
<dbReference type="CDD" id="cd00336">
    <property type="entry name" value="Ribosomal_L22"/>
    <property type="match status" value="1"/>
</dbReference>
<dbReference type="Gene3D" id="3.90.470.10">
    <property type="entry name" value="Ribosomal protein L22/L17"/>
    <property type="match status" value="1"/>
</dbReference>
<dbReference type="HAMAP" id="MF_01331_B">
    <property type="entry name" value="Ribosomal_uL22_B"/>
    <property type="match status" value="1"/>
</dbReference>
<dbReference type="InterPro" id="IPR001063">
    <property type="entry name" value="Ribosomal_uL22"/>
</dbReference>
<dbReference type="InterPro" id="IPR005727">
    <property type="entry name" value="Ribosomal_uL22_bac/chlpt-type"/>
</dbReference>
<dbReference type="InterPro" id="IPR047867">
    <property type="entry name" value="Ribosomal_uL22_bac/org-type"/>
</dbReference>
<dbReference type="InterPro" id="IPR018260">
    <property type="entry name" value="Ribosomal_uL22_CS"/>
</dbReference>
<dbReference type="InterPro" id="IPR036394">
    <property type="entry name" value="Ribosomal_uL22_sf"/>
</dbReference>
<dbReference type="NCBIfam" id="TIGR01044">
    <property type="entry name" value="rplV_bact"/>
    <property type="match status" value="1"/>
</dbReference>
<dbReference type="PANTHER" id="PTHR13501">
    <property type="entry name" value="CHLOROPLAST 50S RIBOSOMAL PROTEIN L22-RELATED"/>
    <property type="match status" value="1"/>
</dbReference>
<dbReference type="PANTHER" id="PTHR13501:SF8">
    <property type="entry name" value="LARGE RIBOSOMAL SUBUNIT PROTEIN UL22M"/>
    <property type="match status" value="1"/>
</dbReference>
<dbReference type="Pfam" id="PF00237">
    <property type="entry name" value="Ribosomal_L22"/>
    <property type="match status" value="1"/>
</dbReference>
<dbReference type="SUPFAM" id="SSF54843">
    <property type="entry name" value="Ribosomal protein L22"/>
    <property type="match status" value="1"/>
</dbReference>
<dbReference type="PROSITE" id="PS00464">
    <property type="entry name" value="RIBOSOMAL_L22"/>
    <property type="match status" value="1"/>
</dbReference>
<evidence type="ECO:0000255" key="1">
    <source>
        <dbReference type="HAMAP-Rule" id="MF_01331"/>
    </source>
</evidence>
<evidence type="ECO:0000305" key="2"/>
<protein>
    <recommendedName>
        <fullName evidence="1">Large ribosomal subunit protein uL22</fullName>
    </recommendedName>
    <alternativeName>
        <fullName evidence="2">50S ribosomal protein L22</fullName>
    </alternativeName>
</protein>
<gene>
    <name evidence="1" type="primary">rplV</name>
    <name evidence="1" type="synonym">rpl22</name>
    <name type="ordered locus">P9515_17351</name>
</gene>
<reference key="1">
    <citation type="journal article" date="2007" name="PLoS Genet.">
        <title>Patterns and implications of gene gain and loss in the evolution of Prochlorococcus.</title>
        <authorList>
            <person name="Kettler G.C."/>
            <person name="Martiny A.C."/>
            <person name="Huang K."/>
            <person name="Zucker J."/>
            <person name="Coleman M.L."/>
            <person name="Rodrigue S."/>
            <person name="Chen F."/>
            <person name="Lapidus A."/>
            <person name="Ferriera S."/>
            <person name="Johnson J."/>
            <person name="Steglich C."/>
            <person name="Church G.M."/>
            <person name="Richardson P."/>
            <person name="Chisholm S.W."/>
        </authorList>
    </citation>
    <scope>NUCLEOTIDE SEQUENCE [LARGE SCALE GENOMIC DNA]</scope>
    <source>
        <strain>MIT 9515</strain>
    </source>
</reference>
<name>RL22_PROM5</name>
<sequence>MIKKSEMTKKAIAHGKYIRGSASKVRRVLDQIRGKSYRDALIMLEFMPYRSTDPITKVLRSAVANAEHNLGMEPSSLVISSASADNGPVMKRFRPRAQGRAFSIKKQTCHISISVESAPNQTNTEAQN</sequence>
<feature type="chain" id="PRO_1000052625" description="Large ribosomal subunit protein uL22">
    <location>
        <begin position="1"/>
        <end position="128"/>
    </location>
</feature>
<accession>A2BYT1</accession>
<organism>
    <name type="scientific">Prochlorococcus marinus (strain MIT 9515)</name>
    <dbReference type="NCBI Taxonomy" id="167542"/>
    <lineage>
        <taxon>Bacteria</taxon>
        <taxon>Bacillati</taxon>
        <taxon>Cyanobacteriota</taxon>
        <taxon>Cyanophyceae</taxon>
        <taxon>Synechococcales</taxon>
        <taxon>Prochlorococcaceae</taxon>
        <taxon>Prochlorococcus</taxon>
    </lineage>
</organism>